<feature type="signal peptide" evidence="2">
    <location>
        <begin position="1"/>
        <end position="20"/>
    </location>
</feature>
<feature type="chain" id="PRO_0000425975" description="Probable glucan 1,3-alpha-glucosidase">
    <location>
        <begin position="21"/>
        <end position="921"/>
    </location>
</feature>
<feature type="active site" description="Nucleophile" evidence="1">
    <location>
        <position position="512"/>
    </location>
</feature>
<feature type="active site" evidence="1">
    <location>
        <position position="515"/>
    </location>
</feature>
<feature type="active site" description="Proton donor" evidence="1">
    <location>
        <position position="588"/>
    </location>
</feature>
<feature type="glycosylation site" description="N-linked (GlcNAc...) asparagine" evidence="2">
    <location>
        <position position="689"/>
    </location>
</feature>
<feature type="glycosylation site" description="N-linked (GlcNAc...) asparagine" evidence="2">
    <location>
        <position position="804"/>
    </location>
</feature>
<feature type="mutagenesis site" description="In psl5-1; Compromised defense response induced by the bacterial elicitor elongation factor Tu (EF-Tu)." evidence="4">
    <original>S</original>
    <variation>F</variation>
    <location>
        <position position="517"/>
    </location>
</feature>
<feature type="mutagenesis site" description="In rsw3; temperature-sensitive radial swelling of roots and reduction in cellulose production." evidence="3">
    <original>S</original>
    <variation>F</variation>
    <location>
        <position position="599"/>
    </location>
</feature>
<keyword id="KW-0256">Endoplasmic reticulum</keyword>
<keyword id="KW-0325">Glycoprotein</keyword>
<keyword id="KW-0326">Glycosidase</keyword>
<keyword id="KW-0378">Hydrolase</keyword>
<keyword id="KW-0611">Plant defense</keyword>
<keyword id="KW-1185">Reference proteome</keyword>
<keyword id="KW-0732">Signal</keyword>
<organism>
    <name type="scientific">Arabidopsis thaliana</name>
    <name type="common">Mouse-ear cress</name>
    <dbReference type="NCBI Taxonomy" id="3702"/>
    <lineage>
        <taxon>Eukaryota</taxon>
        <taxon>Viridiplantae</taxon>
        <taxon>Streptophyta</taxon>
        <taxon>Embryophyta</taxon>
        <taxon>Tracheophyta</taxon>
        <taxon>Spermatophyta</taxon>
        <taxon>Magnoliopsida</taxon>
        <taxon>eudicotyledons</taxon>
        <taxon>Gunneridae</taxon>
        <taxon>Pentapetalae</taxon>
        <taxon>rosids</taxon>
        <taxon>malvids</taxon>
        <taxon>Brassicales</taxon>
        <taxon>Brassicaceae</taxon>
        <taxon>Camelineae</taxon>
        <taxon>Arabidopsis</taxon>
    </lineage>
</organism>
<accession>Q9FN05</accession>
<dbReference type="EC" id="3.2.1.84"/>
<dbReference type="EMBL" id="AB007646">
    <property type="protein sequence ID" value="BAB11032.1"/>
    <property type="molecule type" value="Genomic_DNA"/>
</dbReference>
<dbReference type="EMBL" id="CP002688">
    <property type="protein sequence ID" value="AED97803.1"/>
    <property type="molecule type" value="Genomic_DNA"/>
</dbReference>
<dbReference type="EMBL" id="AK226927">
    <property type="status" value="NOT_ANNOTATED_CDS"/>
    <property type="molecule type" value="mRNA"/>
</dbReference>
<dbReference type="RefSeq" id="NP_201189.1">
    <property type="nucleotide sequence ID" value="NM_125779.3"/>
</dbReference>
<dbReference type="SMR" id="Q9FN05"/>
<dbReference type="BioGRID" id="21746">
    <property type="interactions" value="7"/>
</dbReference>
<dbReference type="FunCoup" id="Q9FN05">
    <property type="interactions" value="4534"/>
</dbReference>
<dbReference type="STRING" id="3702.Q9FN05"/>
<dbReference type="CAZy" id="GH31">
    <property type="family name" value="Glycoside Hydrolase Family 31"/>
</dbReference>
<dbReference type="GlyCosmos" id="Q9FN05">
    <property type="glycosylation" value="2 sites, No reported glycans"/>
</dbReference>
<dbReference type="GlyGen" id="Q9FN05">
    <property type="glycosylation" value="3 sites"/>
</dbReference>
<dbReference type="iPTMnet" id="Q9FN05"/>
<dbReference type="PaxDb" id="3702-AT5G63840.1"/>
<dbReference type="EnsemblPlants" id="AT5G63840.1">
    <property type="protein sequence ID" value="AT5G63840.1"/>
    <property type="gene ID" value="AT5G63840"/>
</dbReference>
<dbReference type="GeneID" id="836504"/>
<dbReference type="Gramene" id="AT5G63840.1">
    <property type="protein sequence ID" value="AT5G63840.1"/>
    <property type="gene ID" value="AT5G63840"/>
</dbReference>
<dbReference type="KEGG" id="ath:AT5G63840"/>
<dbReference type="Araport" id="AT5G63840"/>
<dbReference type="TAIR" id="AT5G63840">
    <property type="gene designation" value="RSW3"/>
</dbReference>
<dbReference type="eggNOG" id="KOG1066">
    <property type="taxonomic scope" value="Eukaryota"/>
</dbReference>
<dbReference type="HOGENOM" id="CLU_000631_7_0_1"/>
<dbReference type="InParanoid" id="Q9FN05"/>
<dbReference type="OMA" id="TVHQPLW"/>
<dbReference type="OrthoDB" id="3237269at2759"/>
<dbReference type="PhylomeDB" id="Q9FN05"/>
<dbReference type="BRENDA" id="3.2.1.207">
    <property type="organism ID" value="399"/>
</dbReference>
<dbReference type="UniPathway" id="UPA00957"/>
<dbReference type="PRO" id="PR:Q9FN05"/>
<dbReference type="Proteomes" id="UP000006548">
    <property type="component" value="Chromosome 5"/>
</dbReference>
<dbReference type="ExpressionAtlas" id="Q9FN05">
    <property type="expression patterns" value="baseline and differential"/>
</dbReference>
<dbReference type="GO" id="GO:0005783">
    <property type="term" value="C:endoplasmic reticulum"/>
    <property type="evidence" value="ECO:0007005"/>
    <property type="project" value="TAIR"/>
</dbReference>
<dbReference type="GO" id="GO:0009536">
    <property type="term" value="C:plastid"/>
    <property type="evidence" value="ECO:0007005"/>
    <property type="project" value="TAIR"/>
</dbReference>
<dbReference type="GO" id="GO:0030246">
    <property type="term" value="F:carbohydrate binding"/>
    <property type="evidence" value="ECO:0007669"/>
    <property type="project" value="InterPro"/>
</dbReference>
<dbReference type="GO" id="GO:0033919">
    <property type="term" value="F:glucan 1,3-alpha-glucosidase activity"/>
    <property type="evidence" value="ECO:0000316"/>
    <property type="project" value="TAIR"/>
</dbReference>
<dbReference type="GO" id="GO:0015926">
    <property type="term" value="F:glucosidase activity"/>
    <property type="evidence" value="ECO:0000315"/>
    <property type="project" value="TAIR"/>
</dbReference>
<dbReference type="GO" id="GO:0030244">
    <property type="term" value="P:cellulose biosynthetic process"/>
    <property type="evidence" value="ECO:0000315"/>
    <property type="project" value="TAIR"/>
</dbReference>
<dbReference type="GO" id="GO:0042742">
    <property type="term" value="P:defense response to bacterium"/>
    <property type="evidence" value="ECO:0000315"/>
    <property type="project" value="TAIR"/>
</dbReference>
<dbReference type="GO" id="GO:0006491">
    <property type="term" value="P:N-glycan processing"/>
    <property type="evidence" value="ECO:0000315"/>
    <property type="project" value="TAIR"/>
</dbReference>
<dbReference type="GO" id="GO:0009826">
    <property type="term" value="P:unidimensional cell growth"/>
    <property type="evidence" value="ECO:0000315"/>
    <property type="project" value="TAIR"/>
</dbReference>
<dbReference type="CDD" id="cd06603">
    <property type="entry name" value="GH31_GANC_GANAB_alpha"/>
    <property type="match status" value="1"/>
</dbReference>
<dbReference type="CDD" id="cd14752">
    <property type="entry name" value="GH31_N"/>
    <property type="match status" value="1"/>
</dbReference>
<dbReference type="FunFam" id="3.20.20.80:FF:000046">
    <property type="entry name" value="Glucosidase alpha, neutral C"/>
    <property type="match status" value="1"/>
</dbReference>
<dbReference type="FunFam" id="3.20.20.80:FF:000039">
    <property type="entry name" value="Glucosidase, alpha neutral C"/>
    <property type="match status" value="1"/>
</dbReference>
<dbReference type="FunFam" id="2.60.40.1760:FF:000011">
    <property type="entry name" value="Glycosyl hydrolases family 31 protein"/>
    <property type="match status" value="1"/>
</dbReference>
<dbReference type="FunFam" id="2.60.40.1180:FF:000023">
    <property type="entry name" value="neutral alpha-glucosidase AB isoform X2"/>
    <property type="match status" value="1"/>
</dbReference>
<dbReference type="Gene3D" id="3.20.20.80">
    <property type="entry name" value="Glycosidases"/>
    <property type="match status" value="2"/>
</dbReference>
<dbReference type="Gene3D" id="2.60.40.1760">
    <property type="entry name" value="glycosyl hydrolase (family 31)"/>
    <property type="match status" value="1"/>
</dbReference>
<dbReference type="Gene3D" id="2.60.40.1180">
    <property type="entry name" value="Golgi alpha-mannosidase II"/>
    <property type="match status" value="2"/>
</dbReference>
<dbReference type="InterPro" id="IPR011013">
    <property type="entry name" value="Gal_mutarotase_sf_dom"/>
</dbReference>
<dbReference type="InterPro" id="IPR048395">
    <property type="entry name" value="Glyco_hydro_31_C"/>
</dbReference>
<dbReference type="InterPro" id="IPR025887">
    <property type="entry name" value="Glyco_hydro_31_N_dom"/>
</dbReference>
<dbReference type="InterPro" id="IPR000322">
    <property type="entry name" value="Glyco_hydro_31_TIM"/>
</dbReference>
<dbReference type="InterPro" id="IPR013780">
    <property type="entry name" value="Glyco_hydro_b"/>
</dbReference>
<dbReference type="InterPro" id="IPR017853">
    <property type="entry name" value="Glycoside_hydrolase_SF"/>
</dbReference>
<dbReference type="PANTHER" id="PTHR22762">
    <property type="entry name" value="ALPHA-GLUCOSIDASE"/>
    <property type="match status" value="1"/>
</dbReference>
<dbReference type="PANTHER" id="PTHR22762:SF54">
    <property type="entry name" value="BCDNA.GH04962"/>
    <property type="match status" value="1"/>
</dbReference>
<dbReference type="Pfam" id="PF13802">
    <property type="entry name" value="Gal_mutarotas_2"/>
    <property type="match status" value="1"/>
</dbReference>
<dbReference type="Pfam" id="PF01055">
    <property type="entry name" value="Glyco_hydro_31_2nd"/>
    <property type="match status" value="1"/>
</dbReference>
<dbReference type="Pfam" id="PF21365">
    <property type="entry name" value="Glyco_hydro_31_3rd"/>
    <property type="match status" value="1"/>
</dbReference>
<dbReference type="SUPFAM" id="SSF51445">
    <property type="entry name" value="(Trans)glycosidases"/>
    <property type="match status" value="1"/>
</dbReference>
<dbReference type="SUPFAM" id="SSF74650">
    <property type="entry name" value="Galactose mutarotase-like"/>
    <property type="match status" value="1"/>
</dbReference>
<dbReference type="SUPFAM" id="SSF51011">
    <property type="entry name" value="Glycosyl hydrolase domain"/>
    <property type="match status" value="1"/>
</dbReference>
<gene>
    <name type="primary">PSL5</name>
    <name type="synonym">RSW3</name>
    <name type="ordered locus">At5g63840</name>
    <name type="ORF">MGI19.5</name>
</gene>
<name>PSL5_ARATH</name>
<protein>
    <recommendedName>
        <fullName>Probable glucan 1,3-alpha-glucosidase</fullName>
        <ecNumber>3.2.1.84</ecNumber>
    </recommendedName>
    <alternativeName>
        <fullName>Glucosidase II subunit alpha</fullName>
    </alternativeName>
    <alternativeName>
        <fullName>Protein PRIORITY IN SWEET LIFE 5</fullName>
    </alternativeName>
    <alternativeName>
        <fullName>Protein RADIAL SWELLING 3</fullName>
    </alternativeName>
</protein>
<proteinExistence type="evidence at protein level"/>
<evidence type="ECO:0000250" key="1"/>
<evidence type="ECO:0000255" key="2"/>
<evidence type="ECO:0000269" key="3">
    <source>
    </source>
</evidence>
<evidence type="ECO:0000269" key="4">
    <source>
    </source>
</evidence>
<evidence type="ECO:0000305" key="5"/>
<sequence>MRSLLFVLSLICFCSQTALSWKKEEFRSCDQTPFCKRARSRTPGACSLIVGDVSITDGDLVAKLLPKAPNQGDGDQIKPLILSLSVYKDGIVRLKIDEDHSLNPPKKRFQVPDVVVSEFEEKKIWLQKVATETISGDTSPSSVVYVSDGYEAVVRHDPFEVYVREKSGDRRRVVSLNSHGLFDFEQLGRKTEGDNWEEKFRTHTDSRPSGPQSISFDVSFYDSSFVYGIPEHATSFALKPTKGPGVEESEPYRLFNLDVFEYDHESPFGLYGSIPFMVSHGKSGKTSGFFWLNAAEMQIDVLANGWDAESGISLPSSHSRIDTFWMSEAGIVDTFFFVGPEPKDVVKQYASVTGTSAMPQLFATGYHQCRWNYKDEEDVAQVDSKFDEHDIPYDVLWLDIEHTDGKRYFTWDSVLFPHPEEMQKKLAAKGRKMVTIVDPHIKRDDSYFLHKEATQMGYYVKDSSGKDFDGWCWPGSSSYIDMLSPEIRKWWGGRFSYKNYVGSTPSLYTWNDMNEPSVFNGPEVTMPRDALHVGGVEHREVHNAYGYYFHMATSDGLVMREEGKDRPFVLSRAIFPGTQRYGAIWTGDNTAEWEHLRVSIPMILTLGLTGITFSGADIGGFFGNPEPELLVRWYQVGAYYPFFRGHAHHDTKRREPWLFGERNTELMRDAIHTRYTLLPYFYTLFREANVTGVPVVRPLWMEFPQDEATFSNDEAFMVGSGLLVQGVYTKGTTQASVYLPGKESWYDLRNGKTYVGGKTHKMDAPEESIPAFQKAGTIIPRKDRFRRSSSQMDNDPYTLVVALNSSQEAEGELYIDDGKSFEFRRGSYIHRRFVFSKGVLTSTNLAPPEARLSSQCLIDRIILLGHSSGPKSALVEPLNQKAEIEMGPLRMGGLVASSGTKVLTIRKPGVRVDQDWTVKIL</sequence>
<reference key="1">
    <citation type="journal article" date="1997" name="DNA Res.">
        <title>Structural analysis of Arabidopsis thaliana chromosome 5. III. Sequence features of the regions of 1,191,918 bp covered by seventeen physically assigned P1 clones.</title>
        <authorList>
            <person name="Nakamura Y."/>
            <person name="Sato S."/>
            <person name="Kaneko T."/>
            <person name="Kotani H."/>
            <person name="Asamizu E."/>
            <person name="Miyajima N."/>
            <person name="Tabata S."/>
        </authorList>
    </citation>
    <scope>NUCLEOTIDE SEQUENCE [LARGE SCALE GENOMIC DNA]</scope>
    <source>
        <strain>cv. Columbia</strain>
    </source>
</reference>
<reference key="2">
    <citation type="journal article" date="2017" name="Plant J.">
        <title>Araport11: a complete reannotation of the Arabidopsis thaliana reference genome.</title>
        <authorList>
            <person name="Cheng C.Y."/>
            <person name="Krishnakumar V."/>
            <person name="Chan A.P."/>
            <person name="Thibaud-Nissen F."/>
            <person name="Schobel S."/>
            <person name="Town C.D."/>
        </authorList>
    </citation>
    <scope>GENOME REANNOTATION</scope>
    <source>
        <strain>cv. Columbia</strain>
    </source>
</reference>
<reference key="3">
    <citation type="submission" date="2006-07" db="EMBL/GenBank/DDBJ databases">
        <title>Large-scale analysis of RIKEN Arabidopsis full-length (RAFL) cDNAs.</title>
        <authorList>
            <person name="Totoki Y."/>
            <person name="Seki M."/>
            <person name="Ishida J."/>
            <person name="Nakajima M."/>
            <person name="Enju A."/>
            <person name="Kamiya A."/>
            <person name="Narusaka M."/>
            <person name="Shin-i T."/>
            <person name="Nakagawa M."/>
            <person name="Sakamoto N."/>
            <person name="Oishi K."/>
            <person name="Kohara Y."/>
            <person name="Kobayashi M."/>
            <person name="Toyoda A."/>
            <person name="Sakaki Y."/>
            <person name="Sakurai T."/>
            <person name="Iida K."/>
            <person name="Akiyama K."/>
            <person name="Satou M."/>
            <person name="Toyoda T."/>
            <person name="Konagaya A."/>
            <person name="Carninci P."/>
            <person name="Kawai J."/>
            <person name="Hayashizaki Y."/>
            <person name="Shinozaki K."/>
        </authorList>
    </citation>
    <scope>NUCLEOTIDE SEQUENCE [LARGE SCALE MRNA]</scope>
    <source>
        <strain>cv. Columbia</strain>
    </source>
</reference>
<reference key="4">
    <citation type="journal article" date="2002" name="Plant J.">
        <title>The cellulose-deficient Arabidopsis mutant rsw3 is defective in a gene encoding a putative glucosidase II, an enzyme processing N-glycans during ER quality control.</title>
        <authorList>
            <person name="Burn J.E."/>
            <person name="Hurley U.A."/>
            <person name="Birch R.J."/>
            <person name="Arioli T."/>
            <person name="Cork A."/>
            <person name="Williamson R.E."/>
        </authorList>
    </citation>
    <scope>FUNCTION</scope>
    <scope>TISSUE SPECIFICITY</scope>
    <scope>DISRUPTION PHENOTYPE</scope>
    <scope>MUTAGENESIS OF SER-599</scope>
</reference>
<reference key="5">
    <citation type="journal article" date="2009" name="Proc. Natl. Acad. Sci. U.S.A.">
        <title>Uncoupling of sustained MAMP receptor signaling from early outputs in an Arabidopsis endoplasmic reticulum glucosidase II allele.</title>
        <authorList>
            <person name="Lu X."/>
            <person name="Tintor N."/>
            <person name="Mentzel T."/>
            <person name="Kombrink E."/>
            <person name="Boller T."/>
            <person name="Robatzek S."/>
            <person name="Schulze-Lefert P."/>
            <person name="Saijo Y."/>
        </authorList>
    </citation>
    <scope>FUNCTION</scope>
    <scope>MUTAGENESIS OF SER-517</scope>
</reference>
<comment type="function">
    <text evidence="1 3 4">Cleaves sequentially the 2 innermost alpha-1,3-linked glucose residues from the Glc(2)Man(9)GlcNAc(2) oligosaccharide precursor of immature glycoproteins (By similarity). Essential for stable accumulation of the receptor EFR that determines the specific perception of bacterial elongation factor Tu (EF-Tu), a potent elicitor of the defense response to pathogen-associated molecular patterns (PAMPs). Required for sustained activation of EFR-mediated signaling, but not receptor FLS2-mediated signaling elicited by the bacterial flagellin flg22.</text>
</comment>
<comment type="catalytic activity">
    <reaction>
        <text>Hydrolysis of terminal (1-&gt;3)-alpha-D-glucosidic links in (1-&gt;3)-alpha-D-glucans.</text>
        <dbReference type="EC" id="3.2.1.84"/>
    </reaction>
</comment>
<comment type="pathway">
    <text>Glycan metabolism; N-glycan metabolism.</text>
</comment>
<comment type="subunit">
    <text evidence="1">Heterodimer of a catalytic alpha subunit (PSL5) and a beta subunit (PSL4).</text>
</comment>
<comment type="subcellular location">
    <subcellularLocation>
        <location evidence="1">Endoplasmic reticulum</location>
    </subcellularLocation>
</comment>
<comment type="tissue specificity">
    <text evidence="3">Expressed in roots, rosette leaves, leaf blades, mature stems, cauline leaves, flower buds, flowers and siliques.</text>
</comment>
<comment type="disruption phenotype">
    <text evidence="3">No visible phenotype under normal growth conditions (permissive temperature of 21 degrees Celsius), but mutant plants have a temperature-sensitive phenotype (when transferred to 30 degrees Celsius) showing radially swollen roots and reduction in cellulose production.</text>
</comment>
<comment type="similarity">
    <text evidence="5">Belongs to the glycosyl hydrolase 31 family.</text>
</comment>
<comment type="sequence caution" evidence="5">
    <conflict type="frameshift">
        <sequence resource="EMBL" id="AK226927"/>
    </conflict>
</comment>